<gene>
    <name evidence="1" type="primary">dnaA</name>
    <name type="ordered locus">Pfl01_0001</name>
</gene>
<proteinExistence type="inferred from homology"/>
<feature type="chain" id="PRO_1000048696" description="Chromosomal replication initiator protein DnaA">
    <location>
        <begin position="1"/>
        <end position="507"/>
    </location>
</feature>
<feature type="region of interest" description="Domain I, interacts with DnaA modulators" evidence="1">
    <location>
        <begin position="1"/>
        <end position="87"/>
    </location>
</feature>
<feature type="region of interest" description="Disordered" evidence="2">
    <location>
        <begin position="85"/>
        <end position="158"/>
    </location>
</feature>
<feature type="region of interest" description="Domain II" evidence="1">
    <location>
        <begin position="87"/>
        <end position="170"/>
    </location>
</feature>
<feature type="region of interest" description="Domain III, AAA+ region" evidence="1">
    <location>
        <begin position="171"/>
        <end position="387"/>
    </location>
</feature>
<feature type="region of interest" description="Domain IV, binds dsDNA" evidence="1">
    <location>
        <begin position="388"/>
        <end position="507"/>
    </location>
</feature>
<feature type="compositionally biased region" description="Low complexity" evidence="2">
    <location>
        <begin position="85"/>
        <end position="110"/>
    </location>
</feature>
<feature type="compositionally biased region" description="Basic and acidic residues" evidence="2">
    <location>
        <begin position="126"/>
        <end position="140"/>
    </location>
</feature>
<feature type="binding site" evidence="1">
    <location>
        <position position="215"/>
    </location>
    <ligand>
        <name>ATP</name>
        <dbReference type="ChEBI" id="CHEBI:30616"/>
    </ligand>
</feature>
<feature type="binding site" evidence="1">
    <location>
        <position position="217"/>
    </location>
    <ligand>
        <name>ATP</name>
        <dbReference type="ChEBI" id="CHEBI:30616"/>
    </ligand>
</feature>
<feature type="binding site" evidence="1">
    <location>
        <position position="218"/>
    </location>
    <ligand>
        <name>ATP</name>
        <dbReference type="ChEBI" id="CHEBI:30616"/>
    </ligand>
</feature>
<feature type="binding site" evidence="1">
    <location>
        <position position="219"/>
    </location>
    <ligand>
        <name>ATP</name>
        <dbReference type="ChEBI" id="CHEBI:30616"/>
    </ligand>
</feature>
<keyword id="KW-0067">ATP-binding</keyword>
<keyword id="KW-0963">Cytoplasm</keyword>
<keyword id="KW-0235">DNA replication</keyword>
<keyword id="KW-0238">DNA-binding</keyword>
<keyword id="KW-0446">Lipid-binding</keyword>
<keyword id="KW-0547">Nucleotide-binding</keyword>
<reference key="1">
    <citation type="journal article" date="2009" name="Genome Biol.">
        <title>Genomic and genetic analyses of diversity and plant interactions of Pseudomonas fluorescens.</title>
        <authorList>
            <person name="Silby M.W."/>
            <person name="Cerdeno-Tarraga A.M."/>
            <person name="Vernikos G.S."/>
            <person name="Giddens S.R."/>
            <person name="Jackson R.W."/>
            <person name="Preston G.M."/>
            <person name="Zhang X.-X."/>
            <person name="Moon C.D."/>
            <person name="Gehrig S.M."/>
            <person name="Godfrey S.A.C."/>
            <person name="Knight C.G."/>
            <person name="Malone J.G."/>
            <person name="Robinson Z."/>
            <person name="Spiers A.J."/>
            <person name="Harris S."/>
            <person name="Challis G.L."/>
            <person name="Yaxley A.M."/>
            <person name="Harris D."/>
            <person name="Seeger K."/>
            <person name="Murphy L."/>
            <person name="Rutter S."/>
            <person name="Squares R."/>
            <person name="Quail M.A."/>
            <person name="Saunders E."/>
            <person name="Mavromatis K."/>
            <person name="Brettin T.S."/>
            <person name="Bentley S.D."/>
            <person name="Hothersall J."/>
            <person name="Stephens E."/>
            <person name="Thomas C.M."/>
            <person name="Parkhill J."/>
            <person name="Levy S.B."/>
            <person name="Rainey P.B."/>
            <person name="Thomson N.R."/>
        </authorList>
    </citation>
    <scope>NUCLEOTIDE SEQUENCE [LARGE SCALE GENOMIC DNA]</scope>
    <source>
        <strain>Pf0-1</strain>
    </source>
</reference>
<comment type="function">
    <text evidence="1">Plays an essential role in the initiation and regulation of chromosomal replication. ATP-DnaA binds to the origin of replication (oriC) to initiate formation of the DNA replication initiation complex once per cell cycle. Binds the DnaA box (a 9 base pair repeat at the origin) and separates the double-stranded (ds)DNA. Forms a right-handed helical filament on oriC DNA; dsDNA binds to the exterior of the filament while single-stranded (ss)DNA is stabiized in the filament's interior. The ATP-DnaA-oriC complex binds and stabilizes one strand of the AT-rich DNA unwinding element (DUE), permitting loading of DNA polymerase. After initiation quickly degrades to an ADP-DnaA complex that is not apt for DNA replication. Binds acidic phospholipids.</text>
</comment>
<comment type="subunit">
    <text evidence="1">Oligomerizes as a right-handed, spiral filament on DNA at oriC.</text>
</comment>
<comment type="subcellular location">
    <subcellularLocation>
        <location evidence="1">Cytoplasm</location>
    </subcellularLocation>
</comment>
<comment type="domain">
    <text evidence="1">Domain I is involved in oligomerization and binding regulators, domain II is flexibile and of varying length in different bacteria, domain III forms the AAA+ region, while domain IV binds dsDNA.</text>
</comment>
<comment type="similarity">
    <text evidence="1">Belongs to the DnaA family.</text>
</comment>
<organism>
    <name type="scientific">Pseudomonas fluorescens (strain Pf0-1)</name>
    <dbReference type="NCBI Taxonomy" id="205922"/>
    <lineage>
        <taxon>Bacteria</taxon>
        <taxon>Pseudomonadati</taxon>
        <taxon>Pseudomonadota</taxon>
        <taxon>Gammaproteobacteria</taxon>
        <taxon>Pseudomonadales</taxon>
        <taxon>Pseudomonadaceae</taxon>
        <taxon>Pseudomonas</taxon>
    </lineage>
</organism>
<accession>Q3KKG1</accession>
<evidence type="ECO:0000255" key="1">
    <source>
        <dbReference type="HAMAP-Rule" id="MF_00377"/>
    </source>
</evidence>
<evidence type="ECO:0000256" key="2">
    <source>
        <dbReference type="SAM" id="MobiDB-lite"/>
    </source>
</evidence>
<dbReference type="EMBL" id="CP000094">
    <property type="protein sequence ID" value="ABA71745.1"/>
    <property type="molecule type" value="Genomic_DNA"/>
</dbReference>
<dbReference type="RefSeq" id="WP_011331732.1">
    <property type="nucleotide sequence ID" value="NC_007492.2"/>
</dbReference>
<dbReference type="SMR" id="Q3KKG1"/>
<dbReference type="KEGG" id="pfo:Pfl01_0001"/>
<dbReference type="eggNOG" id="COG0593">
    <property type="taxonomic scope" value="Bacteria"/>
</dbReference>
<dbReference type="HOGENOM" id="CLU_026910_0_1_6"/>
<dbReference type="Proteomes" id="UP000002704">
    <property type="component" value="Chromosome"/>
</dbReference>
<dbReference type="GO" id="GO:0005737">
    <property type="term" value="C:cytoplasm"/>
    <property type="evidence" value="ECO:0007669"/>
    <property type="project" value="UniProtKB-SubCell"/>
</dbReference>
<dbReference type="GO" id="GO:0005886">
    <property type="term" value="C:plasma membrane"/>
    <property type="evidence" value="ECO:0007669"/>
    <property type="project" value="TreeGrafter"/>
</dbReference>
<dbReference type="GO" id="GO:0005524">
    <property type="term" value="F:ATP binding"/>
    <property type="evidence" value="ECO:0007669"/>
    <property type="project" value="UniProtKB-UniRule"/>
</dbReference>
<dbReference type="GO" id="GO:0016887">
    <property type="term" value="F:ATP hydrolysis activity"/>
    <property type="evidence" value="ECO:0007669"/>
    <property type="project" value="InterPro"/>
</dbReference>
<dbReference type="GO" id="GO:0003688">
    <property type="term" value="F:DNA replication origin binding"/>
    <property type="evidence" value="ECO:0007669"/>
    <property type="project" value="UniProtKB-UniRule"/>
</dbReference>
<dbReference type="GO" id="GO:0008289">
    <property type="term" value="F:lipid binding"/>
    <property type="evidence" value="ECO:0007669"/>
    <property type="project" value="UniProtKB-KW"/>
</dbReference>
<dbReference type="GO" id="GO:0006270">
    <property type="term" value="P:DNA replication initiation"/>
    <property type="evidence" value="ECO:0007669"/>
    <property type="project" value="UniProtKB-UniRule"/>
</dbReference>
<dbReference type="GO" id="GO:0006275">
    <property type="term" value="P:regulation of DNA replication"/>
    <property type="evidence" value="ECO:0007669"/>
    <property type="project" value="UniProtKB-UniRule"/>
</dbReference>
<dbReference type="CDD" id="cd00009">
    <property type="entry name" value="AAA"/>
    <property type="match status" value="1"/>
</dbReference>
<dbReference type="CDD" id="cd06571">
    <property type="entry name" value="Bac_DnaA_C"/>
    <property type="match status" value="1"/>
</dbReference>
<dbReference type="FunFam" id="1.10.1750.10:FF:000001">
    <property type="entry name" value="Chromosomal replication initiator protein DnaA"/>
    <property type="match status" value="1"/>
</dbReference>
<dbReference type="FunFam" id="1.10.8.60:FF:000003">
    <property type="entry name" value="Chromosomal replication initiator protein DnaA"/>
    <property type="match status" value="1"/>
</dbReference>
<dbReference type="FunFam" id="3.40.50.300:FF:000103">
    <property type="entry name" value="Chromosomal replication initiator protein DnaA"/>
    <property type="match status" value="1"/>
</dbReference>
<dbReference type="Gene3D" id="1.10.1750.10">
    <property type="match status" value="1"/>
</dbReference>
<dbReference type="Gene3D" id="1.10.8.60">
    <property type="match status" value="1"/>
</dbReference>
<dbReference type="Gene3D" id="3.30.300.180">
    <property type="match status" value="1"/>
</dbReference>
<dbReference type="Gene3D" id="3.40.50.300">
    <property type="entry name" value="P-loop containing nucleotide triphosphate hydrolases"/>
    <property type="match status" value="1"/>
</dbReference>
<dbReference type="HAMAP" id="MF_00377">
    <property type="entry name" value="DnaA_bact"/>
    <property type="match status" value="1"/>
</dbReference>
<dbReference type="InterPro" id="IPR003593">
    <property type="entry name" value="AAA+_ATPase"/>
</dbReference>
<dbReference type="InterPro" id="IPR001957">
    <property type="entry name" value="Chromosome_initiator_DnaA"/>
</dbReference>
<dbReference type="InterPro" id="IPR020591">
    <property type="entry name" value="Chromosome_initiator_DnaA-like"/>
</dbReference>
<dbReference type="InterPro" id="IPR018312">
    <property type="entry name" value="Chromosome_initiator_DnaA_CS"/>
</dbReference>
<dbReference type="InterPro" id="IPR013159">
    <property type="entry name" value="DnaA_C"/>
</dbReference>
<dbReference type="InterPro" id="IPR013317">
    <property type="entry name" value="DnaA_dom"/>
</dbReference>
<dbReference type="InterPro" id="IPR024633">
    <property type="entry name" value="DnaA_N_dom"/>
</dbReference>
<dbReference type="InterPro" id="IPR038454">
    <property type="entry name" value="DnaA_N_sf"/>
</dbReference>
<dbReference type="InterPro" id="IPR027417">
    <property type="entry name" value="P-loop_NTPase"/>
</dbReference>
<dbReference type="InterPro" id="IPR010921">
    <property type="entry name" value="Trp_repressor/repl_initiator"/>
</dbReference>
<dbReference type="NCBIfam" id="TIGR00362">
    <property type="entry name" value="DnaA"/>
    <property type="match status" value="1"/>
</dbReference>
<dbReference type="PANTHER" id="PTHR30050">
    <property type="entry name" value="CHROMOSOMAL REPLICATION INITIATOR PROTEIN DNAA"/>
    <property type="match status" value="1"/>
</dbReference>
<dbReference type="PANTHER" id="PTHR30050:SF2">
    <property type="entry name" value="CHROMOSOMAL REPLICATION INITIATOR PROTEIN DNAA"/>
    <property type="match status" value="1"/>
</dbReference>
<dbReference type="Pfam" id="PF00308">
    <property type="entry name" value="Bac_DnaA"/>
    <property type="match status" value="1"/>
</dbReference>
<dbReference type="Pfam" id="PF08299">
    <property type="entry name" value="Bac_DnaA_C"/>
    <property type="match status" value="1"/>
</dbReference>
<dbReference type="Pfam" id="PF11638">
    <property type="entry name" value="DnaA_N"/>
    <property type="match status" value="1"/>
</dbReference>
<dbReference type="PRINTS" id="PR00051">
    <property type="entry name" value="DNAA"/>
</dbReference>
<dbReference type="SMART" id="SM00382">
    <property type="entry name" value="AAA"/>
    <property type="match status" value="1"/>
</dbReference>
<dbReference type="SMART" id="SM00760">
    <property type="entry name" value="Bac_DnaA_C"/>
    <property type="match status" value="1"/>
</dbReference>
<dbReference type="SUPFAM" id="SSF52540">
    <property type="entry name" value="P-loop containing nucleoside triphosphate hydrolases"/>
    <property type="match status" value="1"/>
</dbReference>
<dbReference type="SUPFAM" id="SSF48295">
    <property type="entry name" value="TrpR-like"/>
    <property type="match status" value="1"/>
</dbReference>
<dbReference type="PROSITE" id="PS01008">
    <property type="entry name" value="DNAA"/>
    <property type="match status" value="1"/>
</dbReference>
<sequence length="507" mass="57009">MSVELWQQCVELLREELPAQQFNTWIRPLQVEAEGDELRVYAPNRFVLDWVNEKYLGRVLELLDEHGNGLAPSLSLLIGSKRSSAPRAAPNAPLAAAQVSQAQANAAPASAPAPAPTPAPTKRTTQKTEEISEEPSRDSFDPMAGAASQQAPVRAEQRTVQVEGALKHTSYLNRTFTFENFVEGKSNQLARAAAWQVADNPKHGYNPLFLYGGVGLGKTHLMHAVGNHLLKKNPNAKVVYLHSERFVADMVKALQLNAINEFKRFYRSVDALLIDDIQFFARKERSQEEFFHTFNALLEGGQQVILTSDRYPKEIEGLEERLKSRFGWGLTVAVEPPELETRVAILMKKADQAKVELPHDAAFFIAQRIRSNVRELEGALKRVIAHSHFMGRDITIELIRESLKDLLALQDKLVSVDNIQRTVAEYYKIKISDLLSKRRSRSVARPRQVAMALSKELTNHSLPEIGDVFGGRDHTTVLHACRKINELKESDADIREDYKNLLRTLTT</sequence>
<name>DNAA_PSEPF</name>
<protein>
    <recommendedName>
        <fullName evidence="1">Chromosomal replication initiator protein DnaA</fullName>
    </recommendedName>
</protein>